<comment type="function">
    <text evidence="1 2 4 6 7 8 9 11 12 13 14 15 16">Ion channel that contributes to passive transmembrane potassium transport and to the regulation of the resting membrane potential in brain astrocytes, but also in kidney and in other tissues (PubMed:15820677, PubMed:21653227). Forms dimeric channels through which potassium ions pass in accordance with their electrochemical gradient. The channel is selective for K(+) ions at physiological potassium concentrations and at neutral pH, but becomes permeable to Na(+) at subphysiological K(+) levels and upon acidification of the extracellular medium (PubMed:21653227, PubMed:22431633). The homodimer has very low potassium channel activity, when expressed in heterologous systems, and can function as weakly inward rectifying potassium channel (PubMed:15820677, PubMed:21653227, PubMed:22431633, PubMed:23169818, PubMed:25001086, PubMed:8605869, PubMed:8978667). Channel activity is modulated by activation of serotonin receptors (By similarity). Heterodimeric channels containing KCNK1 and KCNK2 have much higher activity, and may represent the predominant form in astrocytes (By similarity). Heterodimeric channels containing KCNK1 and KCNK3 or KCNK9 have much higher activity (PubMed:23169818). Heterodimeric channels formed by KCNK1 and KCNK9 may contribute to halothane-sensitive currents (PubMed:23169818). Mediates outward rectifying potassium currents in dentate gyrus granule cells and contributes to the regulation of their resting membrane potential (By similarity). Contributes to the regulation of action potential firing in dentate gyrus granule cells and down-regulates their intrinsic excitability (By similarity). In astrocytes, the heterodimer formed by KCNK1 and KCNK2 is required for rapid glutamate release in response to activation of G-protein coupled receptors, such as F2R and CNR1 (By similarity). Required for normal ion and water transport in the kidney (By similarity). Contributes to the regulation of the resting membrane potential of pancreatic beta cells (By similarity). The low channel activity of homodimeric KCNK1 may be due to sumoylation (PubMed:15820677, PubMed:20498050, PubMed:23169818). The low channel activity may be due to rapid internalization from the cell membrane and retention in recycling endosomes (PubMed:19959478). Permeable to monovalent cations with ion selectivity for K(+) &gt; Rb(+) &gt;&gt; NH4(+) &gt;&gt; Cs(+) = Na(+) = Li(+).</text>
</comment>
<comment type="catalytic activity">
    <reaction evidence="9 12">
        <text>K(+)(in) = K(+)(out)</text>
        <dbReference type="Rhea" id="RHEA:29463"/>
        <dbReference type="ChEBI" id="CHEBI:29103"/>
    </reaction>
</comment>
<comment type="catalytic activity">
    <reaction evidence="9">
        <text>NH4(+)(in) = NH4(+)(out)</text>
        <dbReference type="Rhea" id="RHEA:28747"/>
        <dbReference type="ChEBI" id="CHEBI:28938"/>
    </reaction>
</comment>
<comment type="catalytic activity">
    <reaction evidence="9 12">
        <text>Na(+)(in) = Na(+)(out)</text>
        <dbReference type="Rhea" id="RHEA:34963"/>
        <dbReference type="ChEBI" id="CHEBI:29101"/>
    </reaction>
</comment>
<comment type="catalytic activity">
    <reaction evidence="9">
        <text>Rb(+)(in) = Rb(+)(out)</text>
        <dbReference type="Rhea" id="RHEA:78547"/>
        <dbReference type="ChEBI" id="CHEBI:49847"/>
    </reaction>
</comment>
<comment type="catalytic activity">
    <reaction evidence="9">
        <text>Cs(+)(in) = Cs(+)(out)</text>
        <dbReference type="Rhea" id="RHEA:78555"/>
        <dbReference type="ChEBI" id="CHEBI:49547"/>
    </reaction>
</comment>
<comment type="catalytic activity">
    <reaction evidence="9">
        <text>Li(+)(in) = Li(+)(out)</text>
        <dbReference type="Rhea" id="RHEA:78551"/>
        <dbReference type="ChEBI" id="CHEBI:49713"/>
    </reaction>
</comment>
<comment type="catalytic activity">
    <reaction evidence="1">
        <text>L-glutamate(out) = L-glutamate(in)</text>
        <dbReference type="Rhea" id="RHEA:66336"/>
        <dbReference type="ChEBI" id="CHEBI:29985"/>
    </reaction>
</comment>
<comment type="catalytic activity">
    <reaction evidence="1">
        <text>chloride(in) = chloride(out)</text>
        <dbReference type="Rhea" id="RHEA:29823"/>
        <dbReference type="ChEBI" id="CHEBI:17996"/>
    </reaction>
</comment>
<comment type="activity regulation">
    <text evidence="4 9 12 15">Inhibited by Ba(2+) ions and quinidine (PubMed:8605869). Inhibited by quinine (PubMed:21653227, PubMed:8605869). Is slightly inhibited by 10 mM tetraethylammonium (TEA), and only marginally inhibited by 4-aminopyridine, charybdotoxin and dendrotoxin (PubMed:8605869). Lowering the extracellular pH to below 6.5 transiently activates the channel, and then inhibits channel activity (PubMed:15820677, PubMed:22431633). Inhibited when the intracellular pH is decreased down to pH 6.0, but this may be due to indirect effects (PubMed:8605869).</text>
</comment>
<comment type="biophysicochemical properties">
    <kinetics>
        <text evidence="7 15">Has a unit conductance of 34 pS. Both activation and channel closure are very rapid. Is not voltage-gated. The relationship between voltage and current is nearly linear. Has a mean open time of 0.3 msec at a membrane potential of -80 mV, and 1.9 msec at +80 mV (PubMed:8605869).</text>
    </kinetics>
</comment>
<comment type="subunit">
    <text evidence="1 4 11 13 16">Homodimer; disulfide-linked (PubMed:22282804, PubMed:8978667). Heterodimer with KCNK2; disulfide-linked (By similarity). In astrocytes, forms mostly heterodimeric potassium channels with KCNK2, with only a minor proportion of functional channels containing homodimeric KCNK1 (By similarity). Interacts with KCNK3 and KCNK9, forming functional heterodimeric channels (PubMed:23169818). Interacts with GNG4 (By similarity). Identified in a complex with PSD and ARF6; interacts only with PSD that is bound to ARF6 (By similarity). Interacts with UBE2I (PubMed:15820677).</text>
</comment>
<comment type="interaction">
    <interactant intactId="EBI-3914675">
        <id>O00180</id>
    </interactant>
    <interactant intactId="EBI-13059134">
        <id>Q13520</id>
        <label>AQP6</label>
    </interactant>
    <organismsDiffer>false</organismsDiffer>
    <experiments>3</experiments>
</comment>
<comment type="interaction">
    <interactant intactId="EBI-3914675">
        <id>O00180</id>
    </interactant>
    <interactant intactId="EBI-358858">
        <id>O14735</id>
        <label>CDIPT</label>
    </interactant>
    <organismsDiffer>false</organismsDiffer>
    <experiments>3</experiments>
</comment>
<comment type="interaction">
    <interactant intactId="EBI-3914675">
        <id>O00180</id>
    </interactant>
    <interactant intactId="EBI-6942903">
        <id>Q96BA8</id>
        <label>CREB3L1</label>
    </interactant>
    <organismsDiffer>false</organismsDiffer>
    <experiments>5</experiments>
</comment>
<comment type="interaction">
    <interactant intactId="EBI-3914675">
        <id>O00180</id>
    </interactant>
    <interactant intactId="EBI-781551">
        <id>Q9Y282</id>
        <label>ERGIC3</label>
    </interactant>
    <organismsDiffer>false</organismsDiffer>
    <experiments>3</experiments>
</comment>
<comment type="interaction">
    <interactant intactId="EBI-3914675">
        <id>O00180</id>
    </interactant>
    <interactant intactId="EBI-3914675">
        <id>O00180</id>
        <label>KCNK1</label>
    </interactant>
    <organismsDiffer>false</organismsDiffer>
    <experiments>2</experiments>
</comment>
<comment type="interaction">
    <interactant intactId="EBI-3914675">
        <id>O00180</id>
    </interactant>
    <interactant intactId="EBI-1211440">
        <id>P27105</id>
        <label>STOM</label>
    </interactant>
    <organismsDiffer>false</organismsDiffer>
    <experiments>3</experiments>
</comment>
<comment type="interaction">
    <interactant intactId="EBI-3914675">
        <id>O00180</id>
    </interactant>
    <interactant intactId="EBI-80140">
        <id>P63165</id>
        <label>SUMO1</label>
    </interactant>
    <organismsDiffer>false</organismsDiffer>
    <experiments>3</experiments>
</comment>
<comment type="interaction">
    <interactant intactId="EBI-3914675">
        <id>O00180</id>
    </interactant>
    <interactant intactId="EBI-7238458">
        <id>Q8IV31</id>
        <label>TMEM139</label>
    </interactant>
    <organismsDiffer>false</organismsDiffer>
    <experiments>3</experiments>
</comment>
<comment type="interaction">
    <interactant intactId="EBI-3914675">
        <id>O00180</id>
    </interactant>
    <interactant intactId="EBI-8638294">
        <id>Q9NUH8</id>
        <label>TMEM14B</label>
    </interactant>
    <organismsDiffer>false</organismsDiffer>
    <experiments>3</experiments>
</comment>
<comment type="subcellular location">
    <subcellularLocation>
        <location evidence="4 6 8 9 11 12 13 14 15 16">Cell membrane</location>
        <topology evidence="11 16 21">Multi-pass membrane protein</topology>
    </subcellularLocation>
    <subcellularLocation>
        <location evidence="7">Recycling endosome</location>
    </subcellularLocation>
    <subcellularLocation>
        <location evidence="2">Synaptic cell membrane</location>
    </subcellularLocation>
    <subcellularLocation>
        <location evidence="1">Cytoplasmic vesicle</location>
    </subcellularLocation>
    <subcellularLocation>
        <location evidence="1">Perikaryon</location>
    </subcellularLocation>
    <subcellularLocation>
        <location evidence="1">Cell projection</location>
        <location evidence="1">Dendrite</location>
    </subcellularLocation>
    <subcellularLocation>
        <location evidence="1">Cell projection</location>
    </subcellularLocation>
    <subcellularLocation>
        <location evidence="10">Apical cell membrane</location>
        <topology evidence="21">Multi-pass membrane protein</topology>
    </subcellularLocation>
    <text evidence="1 2 10">The heterodimer with KCNK2 is detected at the astrocyte cell membrane. Not detected at the astrocyte cell membrane when KCNK2 is absent. Detected on neuronal cell bodies, and to a lesser degree on neuronal cell projections. Detected on hippocampus dentate gyrus granule cell bodies and to a lesser degree on proximal dendrites. Detected at the apical cell membrane in stria vascularis in the cochlea. Detected at the apical cell membrane of vestibular dark cells situated between the crista and the utricle in the inner ear. Detected at the apical cell membrane in kidney proximal tubule segment S1 and in subapical compartments in segments S1, S2 and S3. Predominantly in cytoplasmic structures in kidney distal convoluted tubules and collecting ducts (By similarity). Detected at the apical cell membrane of bronchial epithelial cells (PubMed:21964404).</text>
</comment>
<comment type="tissue specificity">
    <text evidence="3 5 9 10 15 17">Detected in bronchial epithelial cells (PubMed:21964404). Detected in heart left atrium and left ventricle (PubMed:17478540). Detected in cardiac myocytes (at protein level) (PubMed:21653227). Widely expressed with high levels in heart, brain and kidney, and lower levels in colon, ovary, placenta, lung and liver (PubMed:8605869, PubMed:9362344). Highly expressed in cerebellum, and detected at lower levels in amygdala, caudate nucleus, brain cortex, hippocampus, putamen, substantia nigra, thalamus, dorsal root ganglion, spinal cord, pituitary, heart, kidney, lung, placenta, pancreas, stomach, small intestine, uterus and prostate (PubMed:11165377). Detected in right and left heart ventricle and atrium, and in heart Purkinje fibers (PubMed:17478540).</text>
</comment>
<comment type="PTM">
    <text evidence="4 6 8 13">Sumoylation is controversial. Sumoylated by UBE2I (PubMed:15820677). Not sumoylated when expressed in xenopus oocytes or mammalian cells (PubMed:17693262). Sumoylation inactivates the channel, but does not interfere with expression at the cell membrane (PubMed:15820677). Sumoylation of a single subunit is sufficient to silence the dimeric channel (PubMed:20498050, PubMed:23169818). Sumoylation of KCNK1 is sufficient to silence heterodimeric channels formed by KCNK1 and KCNK3 or KCNK9 (PubMed:23169818). Desumoylated by SENP1; this activates the channel (PubMed:15820677, PubMed:20498050, PubMed:23169818). Desumoylated by SENP1; this strongly increases halothane-mediated activation of heterodimeric channels formed with KCNK9 (PubMed:23169818). SENP1 treatment has no effect (PubMed:17693262).</text>
</comment>
<comment type="miscellaneous">
    <text evidence="9 12">When the external K(+) concentration is lowered to subphysiological levels, it takes several minutes till the channel has reached a new, stable state characterized by increased Na(+) permeability (PubMed:21653227). Likewise, when the external pH is lowered to values below 6.5, it takes several minutes till the channel has reached a new, stable state characterized by increased Na(+) permeability (PubMed:22431633). When raising the K(+) concentration back to 5 mM, it takes 40 to 70 minutes for the channel to regain its original selectivity for K(+) (PubMed:21653227). Likewise, it takes more that 25 minutes for the channel to regain its original K(+) selectivity when the pH is raised back to 7.4 (PubMed:22431633).</text>
</comment>
<comment type="similarity">
    <text evidence="21">Belongs to the two pore domain potassium channel (TC 1.A.1.8) family.</text>
</comment>
<protein>
    <recommendedName>
        <fullName>Potassium channel subfamily K member 1</fullName>
    </recommendedName>
    <alternativeName>
        <fullName evidence="19">Inward rectifying potassium channel protein TWIK-1</fullName>
    </alternativeName>
    <alternativeName>
        <fullName evidence="18">Potassium channel K2P1</fullName>
    </alternativeName>
    <alternativeName>
        <fullName>Potassium channel KCNO1</fullName>
    </alternativeName>
</protein>
<proteinExistence type="evidence at protein level"/>
<feature type="chain" id="PRO_0000101740" description="Potassium channel subfamily K member 1">
    <location>
        <begin position="1"/>
        <end position="336"/>
    </location>
</feature>
<feature type="topological domain" description="Cytoplasmic" evidence="11">
    <location>
        <begin position="1"/>
        <end position="20"/>
    </location>
</feature>
<feature type="transmembrane region" description="Helical" evidence="11">
    <location>
        <begin position="21"/>
        <end position="41"/>
    </location>
</feature>
<feature type="topological domain" description="Extracellular" evidence="11 23">
    <location>
        <begin position="42"/>
        <end position="103"/>
    </location>
</feature>
<feature type="intramembrane region" description="Helical; Name=Pore helix 1" evidence="11">
    <location>
        <begin position="104"/>
        <end position="116"/>
    </location>
</feature>
<feature type="intramembrane region" evidence="11">
    <location>
        <begin position="117"/>
        <end position="122"/>
    </location>
</feature>
<feature type="topological domain" description="Extracellular" evidence="11">
    <location>
        <begin position="123"/>
        <end position="132"/>
    </location>
</feature>
<feature type="transmembrane region" description="Helical" evidence="11">
    <location>
        <begin position="133"/>
        <end position="156"/>
    </location>
</feature>
<feature type="topological domain" description="Cytoplasmic" evidence="11">
    <location>
        <begin position="157"/>
        <end position="181"/>
    </location>
</feature>
<feature type="transmembrane region" description="Helical" evidence="11">
    <location>
        <begin position="182"/>
        <end position="202"/>
    </location>
</feature>
<feature type="topological domain" description="Extracellular" evidence="11">
    <location>
        <begin position="203"/>
        <end position="211"/>
    </location>
</feature>
<feature type="intramembrane region" description="Helical; Name=Pore helix 2" evidence="11">
    <location>
        <begin position="212"/>
        <end position="224"/>
    </location>
</feature>
<feature type="intramembrane region" evidence="11">
    <location>
        <begin position="225"/>
        <end position="231"/>
    </location>
</feature>
<feature type="topological domain" description="Extracellular" evidence="11">
    <location>
        <begin position="232"/>
        <end position="243"/>
    </location>
</feature>
<feature type="transmembrane region" description="Helical" evidence="11">
    <location>
        <begin position="244"/>
        <end position="267"/>
    </location>
</feature>
<feature type="topological domain" description="Cytoplasmic" evidence="11">
    <location>
        <begin position="268"/>
        <end position="336"/>
    </location>
</feature>
<feature type="region of interest" description="Selectivity filter 1" evidence="11 22">
    <location>
        <begin position="117"/>
        <end position="122"/>
    </location>
</feature>
<feature type="region of interest" description="Selectivity filter 2" evidence="11">
    <location>
        <begin position="225"/>
        <end position="230"/>
    </location>
</feature>
<feature type="region of interest" description="Important for intracellular retention in recycling endosomes" evidence="7">
    <location>
        <begin position="293"/>
        <end position="299"/>
    </location>
</feature>
<feature type="site" description="Important for increased permeability to Na(+) when K(+) levels are subphysiological" evidence="9">
    <location>
        <position position="118"/>
    </location>
</feature>
<feature type="site" description="Part of a hydrophobic barrier that is stochastically dewetted and limits ion permeability" evidence="12 14">
    <location>
        <position position="146"/>
    </location>
</feature>
<feature type="site" description="Part of a hydrophobic barrier that is stochastically dewetted and limits ion permeability" evidence="14">
    <location>
        <position position="261"/>
    </location>
</feature>
<feature type="modified residue" description="Phosphoserine" evidence="2">
    <location>
        <position position="326"/>
    </location>
</feature>
<feature type="glycosylation site" description="N-linked (GlcNAc...) asparagine" evidence="16">
    <location>
        <position position="95"/>
    </location>
</feature>
<feature type="disulfide bond" description="Interchain" evidence="11 16">
    <location>
        <position position="69"/>
    </location>
</feature>
<feature type="cross-link" description="Glycyl lysine isopeptide (Lys-Gly) (interchain with G-Cter in SUMO)" evidence="4 8">
    <location>
        <position position="274"/>
    </location>
</feature>
<feature type="mutagenesis site" description="Abolishes channel activity and formation of disulfide-linked homodimers." evidence="16">
    <original>C</original>
    <variation>A</variation>
    <location>
        <position position="69"/>
    </location>
</feature>
<feature type="mutagenesis site" description="Abolishes N-glycosylation." evidence="16">
    <original>N</original>
    <variation>A</variation>
    <location>
        <position position="95"/>
    </location>
</feature>
<feature type="mutagenesis site" description="Impairs selectivity for K(+) ions and increases permeability to Na(+) ions, both at pH 7.4 and at pH 6." evidence="12">
    <original>LF</original>
    <variation>FY</variation>
    <location>
        <begin position="108"/>
        <end position="109"/>
    </location>
</feature>
<feature type="mutagenesis site" description="Abolishes change in ion selectivity in the presence of subphysiological K(+) levels." evidence="9">
    <original>T</original>
    <variation>I</variation>
    <location>
        <position position="118"/>
    </location>
</feature>
<feature type="mutagenesis site" description="Increases channel activity, and has only a minor effect on the inhibition by acidification of the extracellular medium." evidence="12">
    <original>H</original>
    <variation>K</variation>
    <location>
        <position position="122"/>
    </location>
</feature>
<feature type="mutagenesis site" description="Decreases channel activity and abolishes inhibition by acidification of the extracellular medium." evidence="4 8 12">
    <original>H</original>
    <variation>N</variation>
    <location>
        <position position="122"/>
    </location>
</feature>
<feature type="mutagenesis site" description="Does not increase the low intrinsic channel activity." evidence="14">
    <original>L</original>
    <variation>A</variation>
    <variation>V</variation>
    <location>
        <position position="146"/>
    </location>
</feature>
<feature type="mutagenesis site" description="Increases channel activity." evidence="12 14">
    <original>L</original>
    <variation>D</variation>
    <location>
        <position position="146"/>
    </location>
</feature>
<feature type="mutagenesis site" description="Increases channel activity." evidence="14">
    <original>L</original>
    <variation>N</variation>
    <variation>T</variation>
    <location>
        <position position="146"/>
    </location>
</feature>
<feature type="mutagenesis site" description="Increases channel activity. Strongly increases channel activity; when associated with S-261." evidence="14">
    <original>L</original>
    <variation>S</variation>
    <location>
        <position position="146"/>
    </location>
</feature>
<feature type="mutagenesis site" description="No effect on channel activity." evidence="15">
    <original>T</original>
    <variation>A</variation>
    <location>
        <position position="161"/>
    </location>
</feature>
<feature type="mutagenesis site" description="No effect on selectivity for K(+) ions." evidence="12">
    <original>L</original>
    <variation>F</variation>
    <location>
        <position position="228"/>
    </location>
</feature>
<feature type="mutagenesis site" description="Strongly decreases activity of homodimeric channels and of heterodimeric channels formed with KCNK3 and with KCNK9. No effect on location at the cell membrane." evidence="13">
    <original>Y</original>
    <variation>F</variation>
    <location>
        <position position="231"/>
    </location>
</feature>
<feature type="mutagenesis site" description="Slightly decreases the increased permeability to Na(+) ions at pH 6." evidence="12">
    <original>T</original>
    <variation>L</variation>
    <location>
        <position position="250"/>
    </location>
</feature>
<feature type="mutagenesis site" description="Increases channel activity." evidence="14">
    <original>L</original>
    <variation>D</variation>
    <variation>N</variation>
    <location>
        <position position="261"/>
    </location>
</feature>
<feature type="mutagenesis site" description="Increases channel activity. Strongly increases channel activity; when associated with S-146." evidence="14">
    <original>L</original>
    <variation>S</variation>
    <location>
        <position position="261"/>
    </location>
</feature>
<feature type="mutagenesis site" description="Converts the electrically silent channel that is present at the cell membrane to an active channel." evidence="8">
    <original>K</original>
    <variation>A</variation>
    <variation>C</variation>
    <variation>D</variation>
    <variation>Q</variation>
    <variation>R</variation>
    <location>
        <position position="274"/>
    </location>
</feature>
<feature type="mutagenesis site" description="Converts the electrically silent channel that is present at the cell membrane to an active channel. No effect on retention in recycling endosomes." evidence="4 6 7 8 9 12">
    <original>K</original>
    <variation>E</variation>
    <location>
        <position position="274"/>
    </location>
</feature>
<feature type="mutagenesis site" description="Strongly increases location at the cell membrane." evidence="7">
    <original>II</original>
    <variation>AA</variation>
    <location>
        <begin position="293"/>
        <end position="294"/>
    </location>
</feature>
<feature type="mutagenesis site" description="No effect on intracellular retention in recycling endosomes." evidence="7">
    <location>
        <begin position="299"/>
        <end position="336"/>
    </location>
</feature>
<feature type="helix" evidence="24">
    <location>
        <begin position="19"/>
        <end position="66"/>
    </location>
</feature>
<feature type="helix" evidence="24">
    <location>
        <begin position="72"/>
        <end position="86"/>
    </location>
</feature>
<feature type="turn" evidence="24">
    <location>
        <begin position="87"/>
        <end position="89"/>
    </location>
</feature>
<feature type="helix" evidence="24">
    <location>
        <begin position="104"/>
        <end position="115"/>
    </location>
</feature>
<feature type="helix" evidence="24">
    <location>
        <begin position="128"/>
        <end position="160"/>
    </location>
</feature>
<feature type="turn" evidence="24">
    <location>
        <begin position="163"/>
        <end position="167"/>
    </location>
</feature>
<feature type="helix" evidence="24">
    <location>
        <begin position="177"/>
        <end position="195"/>
    </location>
</feature>
<feature type="helix" evidence="24">
    <location>
        <begin position="197"/>
        <end position="206"/>
    </location>
</feature>
<feature type="strand" evidence="24">
    <location>
        <begin position="207"/>
        <end position="209"/>
    </location>
</feature>
<feature type="helix" evidence="24">
    <location>
        <begin position="212"/>
        <end position="223"/>
    </location>
</feature>
<feature type="strand" evidence="24">
    <location>
        <begin position="236"/>
        <end position="238"/>
    </location>
</feature>
<feature type="helix" evidence="24">
    <location>
        <begin position="242"/>
        <end position="268"/>
    </location>
</feature>
<feature type="helix" evidence="24">
    <location>
        <begin position="271"/>
        <end position="278"/>
    </location>
</feature>
<reference key="1">
    <citation type="journal article" date="1996" name="EMBO J.">
        <title>TWIK-1, a ubiquitous human weakly inward rectifying K+ channel with a novel structure.</title>
        <authorList>
            <person name="Lesage F."/>
            <person name="Guillemare E."/>
            <person name="Fink M."/>
            <person name="Duprat F."/>
            <person name="Lazdunski M."/>
            <person name="Romey G."/>
            <person name="Barhanin J."/>
        </authorList>
    </citation>
    <scope>NUCLEOTIDE SEQUENCE [MRNA]</scope>
    <scope>FUNCTION</scope>
    <scope>SUBCELLULAR LOCATION</scope>
    <scope>MUTAGENESIS OF THR-161</scope>
    <scope>ACTIVITY REGULATION</scope>
    <scope>BIOPHYSICOCHEMICAL PROPERTIES</scope>
    <scope>TISSUE SPECIFICITY</scope>
    <source>
        <tissue>Kidney</tissue>
    </source>
</reference>
<reference key="2">
    <citation type="journal article" date="1998" name="J. Mol. Med.">
        <title>Sequence and function of the two P domain potassium channels: implications of an emerging superfamily.</title>
        <authorList>
            <person name="Goldstein S.A.N."/>
            <person name="Wang K.-W."/>
            <person name="Ilan N."/>
            <person name="Pausch M.H."/>
        </authorList>
    </citation>
    <scope>NUCLEOTIDE SEQUENCE [MRNA]</scope>
    <scope>REVIEW</scope>
    <source>
        <tissue>Brain</tissue>
    </source>
</reference>
<reference key="3">
    <citation type="journal article" date="1997" name="Am. J. Physiol.">
        <title>Cloning and localization of a double-pore K channel, KCNK1: exclusive expression in distal nephron segments.</title>
        <authorList>
            <person name="Orias M."/>
            <person name="Velazquez H."/>
            <person name="Tung F."/>
            <person name="Lee G."/>
            <person name="Desir G.V."/>
        </authorList>
    </citation>
    <scope>NUCLEOTIDE SEQUENCE [MRNA]</scope>
    <scope>TISSUE SPECIFICITY</scope>
</reference>
<reference key="4">
    <citation type="journal article" date="2006" name="Nature">
        <title>The DNA sequence and biological annotation of human chromosome 1.</title>
        <authorList>
            <person name="Gregory S.G."/>
            <person name="Barlow K.F."/>
            <person name="McLay K.E."/>
            <person name="Kaul R."/>
            <person name="Swarbreck D."/>
            <person name="Dunham A."/>
            <person name="Scott C.E."/>
            <person name="Howe K.L."/>
            <person name="Woodfine K."/>
            <person name="Spencer C.C.A."/>
            <person name="Jones M.C."/>
            <person name="Gillson C."/>
            <person name="Searle S."/>
            <person name="Zhou Y."/>
            <person name="Kokocinski F."/>
            <person name="McDonald L."/>
            <person name="Evans R."/>
            <person name="Phillips K."/>
            <person name="Atkinson A."/>
            <person name="Cooper R."/>
            <person name="Jones C."/>
            <person name="Hall R.E."/>
            <person name="Andrews T.D."/>
            <person name="Lloyd C."/>
            <person name="Ainscough R."/>
            <person name="Almeida J.P."/>
            <person name="Ambrose K.D."/>
            <person name="Anderson F."/>
            <person name="Andrew R.W."/>
            <person name="Ashwell R.I.S."/>
            <person name="Aubin K."/>
            <person name="Babbage A.K."/>
            <person name="Bagguley C.L."/>
            <person name="Bailey J."/>
            <person name="Beasley H."/>
            <person name="Bethel G."/>
            <person name="Bird C.P."/>
            <person name="Bray-Allen S."/>
            <person name="Brown J.Y."/>
            <person name="Brown A.J."/>
            <person name="Buckley D."/>
            <person name="Burton J."/>
            <person name="Bye J."/>
            <person name="Carder C."/>
            <person name="Chapman J.C."/>
            <person name="Clark S.Y."/>
            <person name="Clarke G."/>
            <person name="Clee C."/>
            <person name="Cobley V."/>
            <person name="Collier R.E."/>
            <person name="Corby N."/>
            <person name="Coville G.J."/>
            <person name="Davies J."/>
            <person name="Deadman R."/>
            <person name="Dunn M."/>
            <person name="Earthrowl M."/>
            <person name="Ellington A.G."/>
            <person name="Errington H."/>
            <person name="Frankish A."/>
            <person name="Frankland J."/>
            <person name="French L."/>
            <person name="Garner P."/>
            <person name="Garnett J."/>
            <person name="Gay L."/>
            <person name="Ghori M.R.J."/>
            <person name="Gibson R."/>
            <person name="Gilby L.M."/>
            <person name="Gillett W."/>
            <person name="Glithero R.J."/>
            <person name="Grafham D.V."/>
            <person name="Griffiths C."/>
            <person name="Griffiths-Jones S."/>
            <person name="Grocock R."/>
            <person name="Hammond S."/>
            <person name="Harrison E.S.I."/>
            <person name="Hart E."/>
            <person name="Haugen E."/>
            <person name="Heath P.D."/>
            <person name="Holmes S."/>
            <person name="Holt K."/>
            <person name="Howden P.J."/>
            <person name="Hunt A.R."/>
            <person name="Hunt S.E."/>
            <person name="Hunter G."/>
            <person name="Isherwood J."/>
            <person name="James R."/>
            <person name="Johnson C."/>
            <person name="Johnson D."/>
            <person name="Joy A."/>
            <person name="Kay M."/>
            <person name="Kershaw J.K."/>
            <person name="Kibukawa M."/>
            <person name="Kimberley A.M."/>
            <person name="King A."/>
            <person name="Knights A.J."/>
            <person name="Lad H."/>
            <person name="Laird G."/>
            <person name="Lawlor S."/>
            <person name="Leongamornlert D.A."/>
            <person name="Lloyd D.M."/>
            <person name="Loveland J."/>
            <person name="Lovell J."/>
            <person name="Lush M.J."/>
            <person name="Lyne R."/>
            <person name="Martin S."/>
            <person name="Mashreghi-Mohammadi M."/>
            <person name="Matthews L."/>
            <person name="Matthews N.S.W."/>
            <person name="McLaren S."/>
            <person name="Milne S."/>
            <person name="Mistry S."/>
            <person name="Moore M.J.F."/>
            <person name="Nickerson T."/>
            <person name="O'Dell C.N."/>
            <person name="Oliver K."/>
            <person name="Palmeiri A."/>
            <person name="Palmer S.A."/>
            <person name="Parker A."/>
            <person name="Patel D."/>
            <person name="Pearce A.V."/>
            <person name="Peck A.I."/>
            <person name="Pelan S."/>
            <person name="Phelps K."/>
            <person name="Phillimore B.J."/>
            <person name="Plumb R."/>
            <person name="Rajan J."/>
            <person name="Raymond C."/>
            <person name="Rouse G."/>
            <person name="Saenphimmachak C."/>
            <person name="Sehra H.K."/>
            <person name="Sheridan E."/>
            <person name="Shownkeen R."/>
            <person name="Sims S."/>
            <person name="Skuce C.D."/>
            <person name="Smith M."/>
            <person name="Steward C."/>
            <person name="Subramanian S."/>
            <person name="Sycamore N."/>
            <person name="Tracey A."/>
            <person name="Tromans A."/>
            <person name="Van Helmond Z."/>
            <person name="Wall M."/>
            <person name="Wallis J.M."/>
            <person name="White S."/>
            <person name="Whitehead S.L."/>
            <person name="Wilkinson J.E."/>
            <person name="Willey D.L."/>
            <person name="Williams H."/>
            <person name="Wilming L."/>
            <person name="Wray P.W."/>
            <person name="Wu Z."/>
            <person name="Coulson A."/>
            <person name="Vaudin M."/>
            <person name="Sulston J.E."/>
            <person name="Durbin R.M."/>
            <person name="Hubbard T."/>
            <person name="Wooster R."/>
            <person name="Dunham I."/>
            <person name="Carter N.P."/>
            <person name="McVean G."/>
            <person name="Ross M.T."/>
            <person name="Harrow J."/>
            <person name="Olson M.V."/>
            <person name="Beck S."/>
            <person name="Rogers J."/>
            <person name="Bentley D.R."/>
        </authorList>
    </citation>
    <scope>NUCLEOTIDE SEQUENCE [LARGE SCALE GENOMIC DNA]</scope>
</reference>
<reference key="5">
    <citation type="submission" date="2005-07" db="EMBL/GenBank/DDBJ databases">
        <authorList>
            <person name="Mural R.J."/>
            <person name="Istrail S."/>
            <person name="Sutton G.G."/>
            <person name="Florea L."/>
            <person name="Halpern A.L."/>
            <person name="Mobarry C.M."/>
            <person name="Lippert R."/>
            <person name="Walenz B."/>
            <person name="Shatkay H."/>
            <person name="Dew I."/>
            <person name="Miller J.R."/>
            <person name="Flanigan M.J."/>
            <person name="Edwards N.J."/>
            <person name="Bolanos R."/>
            <person name="Fasulo D."/>
            <person name="Halldorsson B.V."/>
            <person name="Hannenhalli S."/>
            <person name="Turner R."/>
            <person name="Yooseph S."/>
            <person name="Lu F."/>
            <person name="Nusskern D.R."/>
            <person name="Shue B.C."/>
            <person name="Zheng X.H."/>
            <person name="Zhong F."/>
            <person name="Delcher A.L."/>
            <person name="Huson D.H."/>
            <person name="Kravitz S.A."/>
            <person name="Mouchard L."/>
            <person name="Reinert K."/>
            <person name="Remington K.A."/>
            <person name="Clark A.G."/>
            <person name="Waterman M.S."/>
            <person name="Eichler E.E."/>
            <person name="Adams M.D."/>
            <person name="Hunkapiller M.W."/>
            <person name="Myers E.W."/>
            <person name="Venter J.C."/>
        </authorList>
    </citation>
    <scope>NUCLEOTIDE SEQUENCE [LARGE SCALE GENOMIC DNA]</scope>
</reference>
<reference key="6">
    <citation type="journal article" date="2004" name="Genome Res.">
        <title>The status, quality, and expansion of the NIH full-length cDNA project: the Mammalian Gene Collection (MGC).</title>
        <authorList>
            <consortium name="The MGC Project Team"/>
        </authorList>
    </citation>
    <scope>NUCLEOTIDE SEQUENCE [LARGE SCALE MRNA]</scope>
    <source>
        <tissue>Brain</tissue>
    </source>
</reference>
<reference key="7">
    <citation type="journal article" date="1996" name="EMBO J.">
        <title>Dimerization of TWIK-1 K+ channel subunits via a disulfide bridge.</title>
        <authorList>
            <person name="Lesage F."/>
            <person name="Reyes R."/>
            <person name="Fink M."/>
            <person name="Duprat F."/>
            <person name="Guillemare E."/>
            <person name="Lazdunski M."/>
        </authorList>
    </citation>
    <scope>FUNCTION</scope>
    <scope>SUBUNIT</scope>
    <scope>DISULFIDE BOND</scope>
    <scope>GLYCOSYLATION AT ASN-95</scope>
    <scope>MUTAGENESIS OF CYS-69 AND ASN-95</scope>
    <scope>SUBCELLULAR LOCATION</scope>
    <scope>TOPOLOGY</scope>
</reference>
<reference key="8">
    <citation type="journal article" date="2001" name="Brain Res. Mol. Brain Res.">
        <title>Distribution analysis of human two pore domain potassium channels in tissues of the central nervous system and periphery.</title>
        <authorList>
            <person name="Medhurst A.D."/>
            <person name="Rennie G."/>
            <person name="Chapman C.G."/>
            <person name="Meadows H."/>
            <person name="Duckworth M.D."/>
            <person name="Kelsell R.E."/>
            <person name="Gloger I.I."/>
            <person name="Pangalos M.N."/>
        </authorList>
    </citation>
    <scope>TISSUE SPECIFICITY</scope>
</reference>
<reference key="9">
    <citation type="journal article" date="2005" name="Cell">
        <title>Sumoylation silences the plasma membrane leak K+ channel K2P1.</title>
        <authorList>
            <person name="Rajan S."/>
            <person name="Plant L.D."/>
            <person name="Rabin M.L."/>
            <person name="Butler M.H."/>
            <person name="Goldstein S.A."/>
        </authorList>
    </citation>
    <scope>FUNCTION</scope>
    <scope>SUBCELLULAR LOCATION</scope>
    <scope>SUMOYLATION AT LYS-274</scope>
    <scope>MUTAGENESIS OF HIS-122 AND LYS-274</scope>
    <scope>INTERACTION WITH UBE2I</scope>
</reference>
<reference key="10">
    <citation type="journal article" date="2007" name="Cell">
        <title>Does sumoylation control K2P1/TWIK1 background K+ channels?</title>
        <authorList>
            <person name="Feliciangeli S."/>
            <person name="Bendahhou S."/>
            <person name="Sandoz G."/>
            <person name="Gounon P."/>
            <person name="Reichold M."/>
            <person name="Warth R."/>
            <person name="Lazdunski M."/>
            <person name="Barhanin J."/>
            <person name="Lesage F."/>
        </authorList>
    </citation>
    <scope>LACK OF SUMOYLATION AT LYS-274</scope>
    <scope>MUTAGENESIS OF LYS-274</scope>
    <scope>FUNCTION</scope>
    <scope>SUBCELLULAR LOCATION</scope>
</reference>
<reference key="11">
    <citation type="journal article" date="2007" name="J. Physiol. (Lond.)">
        <title>Regional and tissue specific transcript signatures of ion channel genes in the non-diseased human heart.</title>
        <authorList>
            <person name="Gaborit N."/>
            <person name="Le Bouter S."/>
            <person name="Szuts V."/>
            <person name="Varro A."/>
            <person name="Escande D."/>
            <person name="Nattel S."/>
            <person name="Demolombe S."/>
        </authorList>
    </citation>
    <scope>TISSUE SPECIFICITY</scope>
</reference>
<reference key="12">
    <citation type="journal article" date="2010" name="J. Biol. Chem.">
        <title>Potassium channel silencing by constitutive endocytosis and intracellular sequestration.</title>
        <authorList>
            <person name="Feliciangeli S."/>
            <person name="Tardy M.P."/>
            <person name="Sandoz G."/>
            <person name="Chatelain F.C."/>
            <person name="Warth R."/>
            <person name="Barhanin J."/>
            <person name="Bendahhou S."/>
            <person name="Lesage F."/>
        </authorList>
    </citation>
    <scope>FUNCTION</scope>
    <scope>BIOPHYSICOCHEMICAL PROPERTIES</scope>
    <scope>SUBCELLULAR LOCATION</scope>
    <scope>MUTAGENESIS OF LYS-274; 293-ILE-ILE-294 AND 299-LEU--HIS-336</scope>
</reference>
<reference key="13">
    <citation type="journal article" date="2010" name="Proc. Natl. Acad. Sci. U.S.A.">
        <title>One SUMO is sufficient to silence the dimeric potassium channel K2P1.</title>
        <authorList>
            <person name="Plant L.D."/>
            <person name="Dementieva I.S."/>
            <person name="Kollewe A."/>
            <person name="Olikara S."/>
            <person name="Marks J.D."/>
            <person name="Goldstein S.A."/>
        </authorList>
    </citation>
    <scope>SUMOYLATION AT LYS-274</scope>
    <scope>MUTAGENESIS OF HIS-122 AND LYS-274</scope>
    <scope>FUNCTION</scope>
    <scope>SUBCELLULAR LOCATION</scope>
</reference>
<reference key="14">
    <citation type="journal article" date="2011" name="Sci. Signal.">
        <title>TWIK-1 two-pore domain potassium channels change ion selectivity and conduct inward leak sodium currents in hypokalemia.</title>
        <authorList>
            <person name="Ma L."/>
            <person name="Zhang X."/>
            <person name="Chen H."/>
        </authorList>
    </citation>
    <scope>FUNCTION</scope>
    <scope>TRANSPORTER ACTIVITY</scope>
    <scope>SUBCELLULAR LOCATION</scope>
    <scope>MUTAGENESIS OF THR-118 AND LYS-274</scope>
    <scope>TISSUE SPECIFICITY</scope>
    <scope>ACTIVITY REGULATION</scope>
</reference>
<reference key="15">
    <citation type="journal article" date="2012" name="Am. J. Physiol.">
        <title>A role for two-pore K? channels in modulating Na? absorption and Cl? secretion in normal human bronchial epithelial cells.</title>
        <authorList>
            <person name="Zhao K.Q."/>
            <person name="Xiong G."/>
            <person name="Wilber M."/>
            <person name="Cohen N.A."/>
            <person name="Kreindler J.L."/>
        </authorList>
    </citation>
    <scope>TISSUE SPECIFICITY</scope>
    <scope>SUBCELLULAR LOCATION</scope>
</reference>
<reference key="16">
    <citation type="journal article" date="2012" name="Proc. Natl. Acad. Sci. U.S.A.">
        <title>N-terminal acetylome analyses and functional insights of the N-terminal acetyltransferase NatB.</title>
        <authorList>
            <person name="Van Damme P."/>
            <person name="Lasa M."/>
            <person name="Polevoda B."/>
            <person name="Gazquez C."/>
            <person name="Elosegui-Artola A."/>
            <person name="Kim D.S."/>
            <person name="De Juan-Pardo E."/>
            <person name="Demeyer K."/>
            <person name="Hole K."/>
            <person name="Larrea E."/>
            <person name="Timmerman E."/>
            <person name="Prieto J."/>
            <person name="Arnesen T."/>
            <person name="Sherman F."/>
            <person name="Gevaert K."/>
            <person name="Aldabe R."/>
        </authorList>
    </citation>
    <scope>IDENTIFICATION BY MASS SPECTROMETRY [LARGE SCALE ANALYSIS]</scope>
</reference>
<reference key="17">
    <citation type="journal article" date="2012" name="Proc. Natl. Acad. Sci. U.S.A.">
        <title>TWIK1, a unique background channel with variable ion selectivity.</title>
        <authorList>
            <person name="Chatelain F.C."/>
            <person name="Bichet D."/>
            <person name="Douguet D."/>
            <person name="Feliciangeli S."/>
            <person name="Bendahhou S."/>
            <person name="Reichold M."/>
            <person name="Warth R."/>
            <person name="Barhanin J."/>
            <person name="Lesage F."/>
        </authorList>
    </citation>
    <scope>FUNCTION</scope>
    <scope>TRANSPORTER ACTIVITY</scope>
    <scope>SUBCELLULAR LOCATION</scope>
    <scope>MUTAGENESIS OF 108-LEU-PHE-109; THR-118; HIS-122; LEU-146; LEU-228; THR-250 AND LYS-274</scope>
</reference>
<reference key="18">
    <citation type="journal article" date="2012" name="Sci. Signal.">
        <title>SUMOylation silences heterodimeric TASK potassium channels containing K2P1 subunits in cerebellar granule neurons.</title>
        <authorList>
            <person name="Plant L.D."/>
            <person name="Zuniga L."/>
            <person name="Araki D."/>
            <person name="Marks J.D."/>
            <person name="Goldstein S.A."/>
        </authorList>
    </citation>
    <scope>SUBCELLULAR LOCATION</scope>
    <scope>FUNCTION</scope>
    <scope>SUMOYLATION</scope>
    <scope>INTERACTION WITH KCNK3 AND KCNK9</scope>
    <scope>MUTAGENESIS OF TYR-231</scope>
</reference>
<reference key="19">
    <citation type="journal article" date="2015" name="J. Physiol. (Lond.)">
        <title>The family of K2P channels: salient structural and functional properties.</title>
        <authorList>
            <person name="Feliciangeli S."/>
            <person name="Chatelain F.C."/>
            <person name="Bichet D."/>
            <person name="Lesage F."/>
        </authorList>
    </citation>
    <scope>REVIEW</scope>
</reference>
<reference key="20">
    <citation type="journal article" date="2014" name="Nat. Commun.">
        <title>A hydrophobic barrier deep within the inner pore of the TWIK-1 K2P potassium channel.</title>
        <authorList>
            <person name="Aryal P."/>
            <person name="Abd-Wahab F."/>
            <person name="Bucci G."/>
            <person name="Sansom M.S."/>
            <person name="Tucker S.J."/>
        </authorList>
    </citation>
    <scope>FUNCTION</scope>
    <scope>SUBCELLULAR LOCATION</scope>
    <scope>MUTAGENESIS OF LEU-146 AND LEU-261</scope>
    <scope>SITE</scope>
</reference>
<reference key="21">
    <citation type="journal article" date="2015" name="Pflugers Arch.">
        <title>Silent but not dumb: how cellular trafficking and pore gating modulate expression of TWIK1 and THIK2.</title>
        <authorList>
            <person name="Bichet D."/>
            <person name="Blin S."/>
            <person name="Feliciangeli S."/>
            <person name="Chatelain F.C."/>
            <person name="Bobak N."/>
            <person name="Lesage F."/>
        </authorList>
    </citation>
    <scope>REVIEW</scope>
</reference>
<reference key="22">
    <citation type="journal article" date="2012" name="Science">
        <title>Crystal structure of the human two-pore domain potassium channel K2P1.</title>
        <authorList>
            <person name="Miller A.N."/>
            <person name="Long S.B."/>
        </authorList>
    </citation>
    <scope>X-RAY CRYSTALLOGRAPHY (3.4 ANGSTROMS) OF 23-288 IN COMPLEX WITH POTASSIUM IONS</scope>
    <scope>FUNCTION</scope>
    <scope>SUBUNIT</scope>
    <scope>DISULFIDE BOND</scope>
    <scope>TOPOLOGY</scope>
    <scope>SUBCELLULAR LOCATION</scope>
</reference>
<accession>O00180</accession>
<accession>Q13307</accession>
<accession>Q5T5E8</accession>
<organism>
    <name type="scientific">Homo sapiens</name>
    <name type="common">Human</name>
    <dbReference type="NCBI Taxonomy" id="9606"/>
    <lineage>
        <taxon>Eukaryota</taxon>
        <taxon>Metazoa</taxon>
        <taxon>Chordata</taxon>
        <taxon>Craniata</taxon>
        <taxon>Vertebrata</taxon>
        <taxon>Euteleostomi</taxon>
        <taxon>Mammalia</taxon>
        <taxon>Eutheria</taxon>
        <taxon>Euarchontoglires</taxon>
        <taxon>Primates</taxon>
        <taxon>Haplorrhini</taxon>
        <taxon>Catarrhini</taxon>
        <taxon>Hominidae</taxon>
        <taxon>Homo</taxon>
    </lineage>
</organism>
<name>KCNK1_HUMAN</name>
<gene>
    <name type="primary">KCNK1</name>
    <name evidence="20" type="synonym">HOHO1</name>
    <name type="synonym">KCNO1</name>
    <name type="synonym">TWIK1</name>
</gene>
<evidence type="ECO:0000250" key="1">
    <source>
        <dbReference type="UniProtKB" id="O08581"/>
    </source>
</evidence>
<evidence type="ECO:0000250" key="2">
    <source>
        <dbReference type="UniProtKB" id="Q9Z2T2"/>
    </source>
</evidence>
<evidence type="ECO:0000269" key="3">
    <source>
    </source>
</evidence>
<evidence type="ECO:0000269" key="4">
    <source>
    </source>
</evidence>
<evidence type="ECO:0000269" key="5">
    <source>
    </source>
</evidence>
<evidence type="ECO:0000269" key="6">
    <source>
    </source>
</evidence>
<evidence type="ECO:0000269" key="7">
    <source>
    </source>
</evidence>
<evidence type="ECO:0000269" key="8">
    <source>
    </source>
</evidence>
<evidence type="ECO:0000269" key="9">
    <source>
    </source>
</evidence>
<evidence type="ECO:0000269" key="10">
    <source>
    </source>
</evidence>
<evidence type="ECO:0000269" key="11">
    <source>
    </source>
</evidence>
<evidence type="ECO:0000269" key="12">
    <source>
    </source>
</evidence>
<evidence type="ECO:0000269" key="13">
    <source>
    </source>
</evidence>
<evidence type="ECO:0000269" key="14">
    <source>
    </source>
</evidence>
<evidence type="ECO:0000269" key="15">
    <source>
    </source>
</evidence>
<evidence type="ECO:0000269" key="16">
    <source>
    </source>
</evidence>
<evidence type="ECO:0000269" key="17">
    <source>
    </source>
</evidence>
<evidence type="ECO:0000303" key="18">
    <source>
    </source>
</evidence>
<evidence type="ECO:0000303" key="19">
    <source>
    </source>
</evidence>
<evidence type="ECO:0000303" key="20">
    <source>
    </source>
</evidence>
<evidence type="ECO:0000305" key="21"/>
<evidence type="ECO:0000305" key="22">
    <source>
    </source>
</evidence>
<evidence type="ECO:0000305" key="23">
    <source>
    </source>
</evidence>
<evidence type="ECO:0007829" key="24">
    <source>
        <dbReference type="PDB" id="3UKM"/>
    </source>
</evidence>
<sequence>MLQSLAGSSCVRLVERHRSAWCFGFLVLGYLLYLVFGAVVFSSVELPYEDLLRQELRKLKRRFLEEHECLSEQQLEQFLGRVLEASNYGVSVLSNASGNWNWDFTSALFFASTVLSTTGYGHTVPLSDGGKAFCIIYSVIGIPFTLLFLTAVVQRITVHVTRRPVLYFHIRWGFSKQVVAIVHAVLLGFVTVSCFFFIPAAVFSVLEDDWNFLESFYFCFISLSTIGLGDYVPGEGYNQKFRELYKIGITCYLLLGLIAMLVVLETFCELHELKKFRKMFYVKKDKDEDQVHIIEHDQLSFSSITDQAAGMKEDQKQNEPFVATQSSACVDGPANH</sequence>
<keyword id="KW-0002">3D-structure</keyword>
<keyword id="KW-1003">Cell membrane</keyword>
<keyword id="KW-0966">Cell projection</keyword>
<keyword id="KW-0968">Cytoplasmic vesicle</keyword>
<keyword id="KW-1015">Disulfide bond</keyword>
<keyword id="KW-0967">Endosome</keyword>
<keyword id="KW-0325">Glycoprotein</keyword>
<keyword id="KW-0407">Ion channel</keyword>
<keyword id="KW-0406">Ion transport</keyword>
<keyword id="KW-1017">Isopeptide bond</keyword>
<keyword id="KW-0472">Membrane</keyword>
<keyword id="KW-0597">Phosphoprotein</keyword>
<keyword id="KW-0630">Potassium</keyword>
<keyword id="KW-0631">Potassium channel</keyword>
<keyword id="KW-0633">Potassium transport</keyword>
<keyword id="KW-1267">Proteomics identification</keyword>
<keyword id="KW-1185">Reference proteome</keyword>
<keyword id="KW-0770">Synapse</keyword>
<keyword id="KW-0812">Transmembrane</keyword>
<keyword id="KW-1133">Transmembrane helix</keyword>
<keyword id="KW-0813">Transport</keyword>
<keyword id="KW-0832">Ubl conjugation</keyword>
<dbReference type="EMBL" id="U33632">
    <property type="protein sequence ID" value="AAB01688.1"/>
    <property type="molecule type" value="mRNA"/>
</dbReference>
<dbReference type="EMBL" id="U76996">
    <property type="protein sequence ID" value="AAB97878.1"/>
    <property type="molecule type" value="mRNA"/>
</dbReference>
<dbReference type="EMBL" id="U90065">
    <property type="protein sequence ID" value="AAB51147.1"/>
    <property type="molecule type" value="mRNA"/>
</dbReference>
<dbReference type="EMBL" id="AL356357">
    <property type="status" value="NOT_ANNOTATED_CDS"/>
    <property type="molecule type" value="Genomic_DNA"/>
</dbReference>
<dbReference type="EMBL" id="CH471098">
    <property type="protein sequence ID" value="EAW69989.1"/>
    <property type="molecule type" value="Genomic_DNA"/>
</dbReference>
<dbReference type="EMBL" id="BC018051">
    <property type="protein sequence ID" value="AAH18051.1"/>
    <property type="molecule type" value="mRNA"/>
</dbReference>
<dbReference type="CCDS" id="CCDS1599.1"/>
<dbReference type="PIR" id="S65566">
    <property type="entry name" value="S65566"/>
</dbReference>
<dbReference type="RefSeq" id="NP_002236.1">
    <property type="nucleotide sequence ID" value="NM_002245.4"/>
</dbReference>
<dbReference type="PDB" id="3UKM">
    <property type="method" value="X-ray"/>
    <property type="resolution" value="3.40 A"/>
    <property type="chains" value="A/B/C/D=19-288"/>
</dbReference>
<dbReference type="PDBsum" id="3UKM"/>
<dbReference type="SMR" id="O00180"/>
<dbReference type="BioGRID" id="109976">
    <property type="interactions" value="83"/>
</dbReference>
<dbReference type="DIP" id="DIP-59532N"/>
<dbReference type="FunCoup" id="O00180">
    <property type="interactions" value="417"/>
</dbReference>
<dbReference type="IntAct" id="O00180">
    <property type="interactions" value="70"/>
</dbReference>
<dbReference type="STRING" id="9606.ENSP00000355580"/>
<dbReference type="DrugBank" id="DB00308">
    <property type="generic name" value="Ibutilide"/>
</dbReference>
<dbReference type="DrugBank" id="DB00908">
    <property type="generic name" value="Quinidine"/>
</dbReference>
<dbReference type="DrugBank" id="DB01346">
    <property type="generic name" value="Quinidine barbiturate"/>
</dbReference>
<dbReference type="GlyCosmos" id="O00180">
    <property type="glycosylation" value="1 site, No reported glycans"/>
</dbReference>
<dbReference type="GlyGen" id="O00180">
    <property type="glycosylation" value="1 site"/>
</dbReference>
<dbReference type="iPTMnet" id="O00180"/>
<dbReference type="PhosphoSitePlus" id="O00180"/>
<dbReference type="SwissPalm" id="O00180"/>
<dbReference type="BioMuta" id="KCNK1"/>
<dbReference type="jPOST" id="O00180"/>
<dbReference type="MassIVE" id="O00180"/>
<dbReference type="PaxDb" id="9606-ENSP00000355580"/>
<dbReference type="PeptideAtlas" id="O00180"/>
<dbReference type="ProteomicsDB" id="47763"/>
<dbReference type="Pumba" id="O00180"/>
<dbReference type="Antibodypedia" id="20802">
    <property type="antibodies" value="309 antibodies from 32 providers"/>
</dbReference>
<dbReference type="DNASU" id="3775"/>
<dbReference type="Ensembl" id="ENST00000366621.8">
    <property type="protein sequence ID" value="ENSP00000355580.3"/>
    <property type="gene ID" value="ENSG00000135750.15"/>
</dbReference>
<dbReference type="GeneID" id="3775"/>
<dbReference type="KEGG" id="hsa:3775"/>
<dbReference type="MANE-Select" id="ENST00000366621.8">
    <property type="protein sequence ID" value="ENSP00000355580.3"/>
    <property type="RefSeq nucleotide sequence ID" value="NM_002245.4"/>
    <property type="RefSeq protein sequence ID" value="NP_002236.1"/>
</dbReference>
<dbReference type="UCSC" id="uc010pxo.1">
    <property type="organism name" value="human"/>
</dbReference>
<dbReference type="AGR" id="HGNC:6272"/>
<dbReference type="CTD" id="3775"/>
<dbReference type="DisGeNET" id="3775"/>
<dbReference type="GeneCards" id="KCNK1"/>
<dbReference type="HGNC" id="HGNC:6272">
    <property type="gene designation" value="KCNK1"/>
</dbReference>
<dbReference type="HPA" id="ENSG00000135750">
    <property type="expression patterns" value="Tissue enhanced (brain, choroid plexus)"/>
</dbReference>
<dbReference type="MIM" id="601745">
    <property type="type" value="gene"/>
</dbReference>
<dbReference type="neXtProt" id="NX_O00180"/>
<dbReference type="OpenTargets" id="ENSG00000135750"/>
<dbReference type="PharmGKB" id="PA219"/>
<dbReference type="VEuPathDB" id="HostDB:ENSG00000135750"/>
<dbReference type="eggNOG" id="KOG1418">
    <property type="taxonomic scope" value="Eukaryota"/>
</dbReference>
<dbReference type="GeneTree" id="ENSGT00940000155293"/>
<dbReference type="HOGENOM" id="CLU_022504_6_0_1"/>
<dbReference type="InParanoid" id="O00180"/>
<dbReference type="OMA" id="SAWCFGL"/>
<dbReference type="OrthoDB" id="297496at2759"/>
<dbReference type="PAN-GO" id="O00180">
    <property type="GO annotations" value="4 GO annotations based on evolutionary models"/>
</dbReference>
<dbReference type="PhylomeDB" id="O00180"/>
<dbReference type="TreeFam" id="TF313947"/>
<dbReference type="PathwayCommons" id="O00180"/>
<dbReference type="Reactome" id="R-HSA-1299308">
    <property type="pathway name" value="Tandem of pore domain in a weak inwardly rectifying K+ channels (TWIK)"/>
</dbReference>
<dbReference type="Reactome" id="R-HSA-5576886">
    <property type="pathway name" value="Phase 4 - resting membrane potential"/>
</dbReference>
<dbReference type="SignaLink" id="O00180"/>
<dbReference type="BioGRID-ORCS" id="3775">
    <property type="hits" value="13 hits in 1154 CRISPR screens"/>
</dbReference>
<dbReference type="ChiTaRS" id="KCNK1">
    <property type="organism name" value="human"/>
</dbReference>
<dbReference type="EvolutionaryTrace" id="O00180"/>
<dbReference type="GeneWiki" id="KCNK1"/>
<dbReference type="GenomeRNAi" id="3775"/>
<dbReference type="Pharos" id="O00180">
    <property type="development level" value="Tbio"/>
</dbReference>
<dbReference type="PRO" id="PR:O00180"/>
<dbReference type="Proteomes" id="UP000005640">
    <property type="component" value="Chromosome 1"/>
</dbReference>
<dbReference type="RNAct" id="O00180">
    <property type="molecule type" value="protein"/>
</dbReference>
<dbReference type="Bgee" id="ENSG00000135750">
    <property type="expression patterns" value="Expressed in cerebellar vermis and 195 other cell types or tissues"/>
</dbReference>
<dbReference type="ExpressionAtlas" id="O00180">
    <property type="expression patterns" value="baseline and differential"/>
</dbReference>
<dbReference type="GO" id="GO:0016324">
    <property type="term" value="C:apical plasma membrane"/>
    <property type="evidence" value="ECO:0007669"/>
    <property type="project" value="UniProtKB-SubCell"/>
</dbReference>
<dbReference type="GO" id="GO:0031526">
    <property type="term" value="C:brush border membrane"/>
    <property type="evidence" value="ECO:0007669"/>
    <property type="project" value="Ensembl"/>
</dbReference>
<dbReference type="GO" id="GO:0030425">
    <property type="term" value="C:dendrite"/>
    <property type="evidence" value="ECO:0007669"/>
    <property type="project" value="UniProtKB-SubCell"/>
</dbReference>
<dbReference type="GO" id="GO:0043231">
    <property type="term" value="C:intracellular membrane-bounded organelle"/>
    <property type="evidence" value="ECO:0000314"/>
    <property type="project" value="HPA"/>
</dbReference>
<dbReference type="GO" id="GO:1902937">
    <property type="term" value="C:inward rectifier potassium channel complex"/>
    <property type="evidence" value="ECO:0007669"/>
    <property type="project" value="Ensembl"/>
</dbReference>
<dbReference type="GO" id="GO:0016020">
    <property type="term" value="C:membrane"/>
    <property type="evidence" value="ECO:0000314"/>
    <property type="project" value="UniProtKB"/>
</dbReference>
<dbReference type="GO" id="GO:0043204">
    <property type="term" value="C:perikaryon"/>
    <property type="evidence" value="ECO:0007669"/>
    <property type="project" value="UniProtKB-SubCell"/>
</dbReference>
<dbReference type="GO" id="GO:0005886">
    <property type="term" value="C:plasma membrane"/>
    <property type="evidence" value="ECO:0000314"/>
    <property type="project" value="UniProtKB"/>
</dbReference>
<dbReference type="GO" id="GO:0034705">
    <property type="term" value="C:potassium channel complex"/>
    <property type="evidence" value="ECO:0000314"/>
    <property type="project" value="UniProtKB"/>
</dbReference>
<dbReference type="GO" id="GO:0055037">
    <property type="term" value="C:recycling endosome"/>
    <property type="evidence" value="ECO:0007669"/>
    <property type="project" value="UniProtKB-SubCell"/>
</dbReference>
<dbReference type="GO" id="GO:0097060">
    <property type="term" value="C:synaptic membrane"/>
    <property type="evidence" value="ECO:0007669"/>
    <property type="project" value="UniProtKB-SubCell"/>
</dbReference>
<dbReference type="GO" id="GO:0008076">
    <property type="term" value="C:voltage-gated potassium channel complex"/>
    <property type="evidence" value="ECO:0000304"/>
    <property type="project" value="ProtInc"/>
</dbReference>
<dbReference type="GO" id="GO:0042802">
    <property type="term" value="F:identical protein binding"/>
    <property type="evidence" value="ECO:0000353"/>
    <property type="project" value="IntAct"/>
</dbReference>
<dbReference type="GO" id="GO:0005242">
    <property type="term" value="F:inward rectifier potassium channel activity"/>
    <property type="evidence" value="ECO:0000304"/>
    <property type="project" value="ProtInc"/>
</dbReference>
<dbReference type="GO" id="GO:0022834">
    <property type="term" value="F:ligand-gated channel activity"/>
    <property type="evidence" value="ECO:0000250"/>
    <property type="project" value="UniProtKB"/>
</dbReference>
<dbReference type="GO" id="GO:0005267">
    <property type="term" value="F:potassium channel activity"/>
    <property type="evidence" value="ECO:0000314"/>
    <property type="project" value="UniProtKB"/>
</dbReference>
<dbReference type="GO" id="GO:0022841">
    <property type="term" value="F:potassium ion leak channel activity"/>
    <property type="evidence" value="ECO:0000314"/>
    <property type="project" value="UniProtKB"/>
</dbReference>
<dbReference type="GO" id="GO:0046982">
    <property type="term" value="F:protein heterodimerization activity"/>
    <property type="evidence" value="ECO:0000314"/>
    <property type="project" value="UniProtKB"/>
</dbReference>
<dbReference type="GO" id="GO:0005272">
    <property type="term" value="F:sodium channel activity"/>
    <property type="evidence" value="ECO:0000314"/>
    <property type="project" value="UniProtKB"/>
</dbReference>
<dbReference type="GO" id="GO:1905030">
    <property type="term" value="F:voltage-gated monoatomic ion channel activity involved in regulation of postsynaptic membrane potential"/>
    <property type="evidence" value="ECO:0007669"/>
    <property type="project" value="Ensembl"/>
</dbReference>
<dbReference type="GO" id="GO:0071468">
    <property type="term" value="P:cellular response to acidic pH"/>
    <property type="evidence" value="ECO:0007669"/>
    <property type="project" value="Ensembl"/>
</dbReference>
<dbReference type="GO" id="GO:1902476">
    <property type="term" value="P:chloride transmembrane transport"/>
    <property type="evidence" value="ECO:0000250"/>
    <property type="project" value="UniProtKB"/>
</dbReference>
<dbReference type="GO" id="GO:0014047">
    <property type="term" value="P:glutamate secretion"/>
    <property type="evidence" value="ECO:0000250"/>
    <property type="project" value="UniProtKB"/>
</dbReference>
<dbReference type="GO" id="GO:0071805">
    <property type="term" value="P:potassium ion transmembrane transport"/>
    <property type="evidence" value="ECO:0000314"/>
    <property type="project" value="UniProtKB"/>
</dbReference>
<dbReference type="GO" id="GO:0006813">
    <property type="term" value="P:potassium ion transport"/>
    <property type="evidence" value="ECO:0000304"/>
    <property type="project" value="ProtInc"/>
</dbReference>
<dbReference type="GO" id="GO:0060075">
    <property type="term" value="P:regulation of resting membrane potential"/>
    <property type="evidence" value="ECO:0000315"/>
    <property type="project" value="UniProtKB"/>
</dbReference>
<dbReference type="GO" id="GO:0035094">
    <property type="term" value="P:response to nicotine"/>
    <property type="evidence" value="ECO:0007669"/>
    <property type="project" value="Ensembl"/>
</dbReference>
<dbReference type="GO" id="GO:0035725">
    <property type="term" value="P:sodium ion transmembrane transport"/>
    <property type="evidence" value="ECO:0000314"/>
    <property type="project" value="UniProtKB"/>
</dbReference>
<dbReference type="FunFam" id="1.10.287.70:FF:000076">
    <property type="entry name" value="Potassium channel subfamily K member"/>
    <property type="match status" value="1"/>
</dbReference>
<dbReference type="Gene3D" id="1.10.287.70">
    <property type="match status" value="1"/>
</dbReference>
<dbReference type="InterPro" id="IPR003280">
    <property type="entry name" value="2pore_dom_K_chnl"/>
</dbReference>
<dbReference type="InterPro" id="IPR003092">
    <property type="entry name" value="2pore_dom_K_chnl_TASK"/>
</dbReference>
<dbReference type="InterPro" id="IPR005408">
    <property type="entry name" value="2pore_dom_K_chnl_TWIK"/>
</dbReference>
<dbReference type="InterPro" id="IPR001779">
    <property type="entry name" value="2pore_dom_K_chnl_TWIK1"/>
</dbReference>
<dbReference type="InterPro" id="IPR013099">
    <property type="entry name" value="K_chnl_dom"/>
</dbReference>
<dbReference type="PANTHER" id="PTHR11003:SF59">
    <property type="entry name" value="POTASSIUM CHANNEL SUBFAMILY K MEMBER 1"/>
    <property type="match status" value="1"/>
</dbReference>
<dbReference type="PANTHER" id="PTHR11003">
    <property type="entry name" value="POTASSIUM CHANNEL, SUBFAMILY K"/>
    <property type="match status" value="1"/>
</dbReference>
<dbReference type="Pfam" id="PF07885">
    <property type="entry name" value="Ion_trans_2"/>
    <property type="match status" value="2"/>
</dbReference>
<dbReference type="PIRSF" id="PIRSF038061">
    <property type="entry name" value="K_channel_subfamily_K_type"/>
    <property type="match status" value="1"/>
</dbReference>
<dbReference type="PRINTS" id="PR01333">
    <property type="entry name" value="2POREKCHANEL"/>
</dbReference>
<dbReference type="PRINTS" id="PR01096">
    <property type="entry name" value="TWIK1CHANNEL"/>
</dbReference>
<dbReference type="PRINTS" id="PR01586">
    <property type="entry name" value="TWIKCHANNEL"/>
</dbReference>
<dbReference type="SUPFAM" id="SSF81324">
    <property type="entry name" value="Voltage-gated potassium channels"/>
    <property type="match status" value="2"/>
</dbReference>